<gene>
    <name type="primary">Il3</name>
    <name type="synonym">Csfmu</name>
    <name type="synonym">Il-3</name>
</gene>
<proteinExistence type="evidence at protein level"/>
<reference key="1">
    <citation type="journal article" date="1984" name="Nature">
        <title>Molecular cloning of cDNA for murine interleukin-3.</title>
        <authorList>
            <person name="Fung M.-C."/>
            <person name="Hapel A.J."/>
            <person name="Ymer S."/>
            <person name="Cohen D.R."/>
            <person name="Johnson R.M."/>
            <person name="Campbell H.D."/>
            <person name="Young I.G."/>
        </authorList>
    </citation>
    <scope>NUCLEOTIDE SEQUENCE [MRNA]</scope>
</reference>
<reference key="2">
    <citation type="journal article" date="1984" name="Proc. Natl. Acad. Sci. U.S.A.">
        <title>Isolation and characterization of a mouse cDNA clone that expresses mast-cell growth-factor activity in monkey cells.</title>
        <authorList>
            <person name="Yokota T."/>
            <person name="Lee F."/>
            <person name="Rennick D."/>
            <person name="Hall C."/>
            <person name="Arai N."/>
            <person name="Mosmann T."/>
            <person name="Nabel G."/>
            <person name="Cantor H."/>
            <person name="Arai K."/>
        </authorList>
    </citation>
    <scope>NUCLEOTIDE SEQUENCE [MRNA]</scope>
</reference>
<reference key="3">
    <citation type="journal article" date="1985" name="Proc. Natl. Acad. Sci. U.S.A.">
        <title>Structure of the chromosomal gene for murine interleukin 3.</title>
        <authorList>
            <person name="Miyatake S."/>
            <person name="Yokota T."/>
            <person name="Lee F."/>
            <person name="Arai K."/>
        </authorList>
    </citation>
    <scope>NUCLEOTIDE SEQUENCE [GENOMIC DNA]</scope>
</reference>
<reference key="4">
    <citation type="journal article" date="1985" name="Eur. J. Biochem.">
        <title>Cloning and nucleotide sequence of the murine interleukin-3 gene.</title>
        <authorList>
            <person name="Campbell H.D."/>
            <person name="Ymer S."/>
            <person name="Fung M.-C."/>
            <person name="Young I.G."/>
        </authorList>
    </citation>
    <scope>NUCLEOTIDE SEQUENCE [GENOMIC DNA]</scope>
</reference>
<reference key="5">
    <citation type="journal article" date="1985" name="Gene">
        <title>Isolation and characterization of a genomic DDD mouse interleukin-3 gene.</title>
        <authorList>
            <person name="Todokoro K."/>
            <person name="Yamamoto A."/>
            <person name="Amanuma H."/>
            <person name="Ikawa Y."/>
        </authorList>
    </citation>
    <scope>NUCLEOTIDE SEQUENCE [GENOMIC DNA]</scope>
    <source>
        <strain>DDD</strain>
    </source>
</reference>
<reference key="6">
    <citation type="journal article" date="1992" name="Biochemistry">
        <title>Determination of the glycosylation patterns, disulfide linkages, and protein heterogeneities of baculovirus-expressed mouse interleukin-3 by mass spectrometry.</title>
        <authorList>
            <person name="Knepper T.P."/>
            <person name="Arbogast B."/>
            <person name="Schreurs J."/>
            <person name="Deinzer M.L."/>
        </authorList>
    </citation>
    <scope>GLYCOSYLATION AT ASN-42 AND ASN-112</scope>
    <scope>DISULFIDE BONDS</scope>
</reference>
<reference key="7">
    <citation type="journal article" date="1998" name="Blood">
        <title>Involvement of interleukin-3 in delayed-type hypersensitivity.</title>
        <authorList>
            <person name="Mach N."/>
            <person name="Lantz C.S."/>
            <person name="Galli S.J."/>
            <person name="Reznikoff G."/>
            <person name="Mihm M."/>
            <person name="Small C."/>
            <person name="Granstein R."/>
            <person name="Beissert S."/>
            <person name="Sadelain M."/>
            <person name="Mulligan R.C."/>
            <person name="Dranoff G."/>
        </authorList>
    </citation>
    <scope>FUNCTION</scope>
    <scope>DISRUPTION PHENOTYPE</scope>
</reference>
<reference key="8">
    <citation type="journal article" date="1993" name="Proc. Natl. Acad. Sci. U.S.A.">
        <title>Structure of the murine Jak2 protein-tyrosine kinase and its role in interleukin 3 signal transduction.</title>
        <authorList>
            <person name="Silvennoinen O."/>
            <person name="Witthuhn B.A."/>
            <person name="Quelle F.W."/>
            <person name="Cleveland J.L."/>
            <person name="Yi T."/>
            <person name="Ihle J.N."/>
        </authorList>
    </citation>
    <scope>FUNCTION IN JAK2 ACTIVATION</scope>
</reference>
<reference key="9">
    <citation type="journal article" date="1999" name="Cell. Signal.">
        <title>Role of STAT5 in interferon-alpha signal transduction in Ba/F3 cells.</title>
        <authorList>
            <person name="Jaster R."/>
            <person name="Tschirch E."/>
            <person name="Bittorf T."/>
            <person name="Brock J."/>
        </authorList>
    </citation>
    <scope>FUNCTION IN STAT5 ACTIVATION</scope>
</reference>
<reference key="10">
    <citation type="journal article" date="2020" name="JCI Insight">
        <title>The RNFT2/IL-3Ralpha axis regulates IL-3 signaling and innate immunity.</title>
        <authorList>
            <person name="Tong Y."/>
            <person name="Lear T.B."/>
            <person name="Evankovich J."/>
            <person name="Chen Y."/>
            <person name="Londino J.D."/>
            <person name="Myerburg M.M."/>
            <person name="Zhang Y."/>
            <person name="Popescu I.D."/>
            <person name="McDyer J.F."/>
            <person name="McVerry B.J."/>
            <person name="Lockwood K.C."/>
            <person name="Jurczak M.J."/>
            <person name="Liu Y."/>
            <person name="Chen B.B."/>
        </authorList>
    </citation>
    <scope>FUNCTION</scope>
</reference>
<reference key="11">
    <citation type="journal article" date="2011" name="Biochemistry">
        <title>Murine interleukin-3: structure, dynamics, and conformational heterogeneity in solution.</title>
        <authorList>
            <person name="Yao S."/>
            <person name="Young I.G."/>
            <person name="Norton R.S."/>
            <person name="Murphy J.M."/>
        </authorList>
    </citation>
    <scope>STRUCTURE BY NMR OF 33-156</scope>
    <scope>DISULFIDE BOND</scope>
</reference>
<sequence length="166" mass="18540">MVLASSTTSIHTMLLLLLMLFHLGLQASISGRDTHRLTRTLNCSSIVKEIIGKLPEPELKTDDEGPSLRNKSFRRVNLSKFVESQGEVDPEDRYVIKSNLQKLNCCLPTSANDSALPGVFIRDLDDFRKKLRFYMVHLNDLETVLTSRPPQPASGSVSPNRGTVEC</sequence>
<name>IL3_MOUSE</name>
<protein>
    <recommendedName>
        <fullName>Interleukin-3</fullName>
        <shortName>IL-3</shortName>
    </recommendedName>
    <alternativeName>
        <fullName>Hematopoietic growth factor</fullName>
    </alternativeName>
    <alternativeName>
        <fullName>Mast cell growth factor</fullName>
        <shortName>MCGF</shortName>
    </alternativeName>
    <alternativeName>
        <fullName>Multipotential colony-stimulating factor</fullName>
    </alternativeName>
    <alternativeName>
        <fullName>P-cell-stimulating factor</fullName>
    </alternativeName>
</protein>
<comment type="function">
    <text evidence="1 3 5 6 7">Cytokine secreted predominantly by activated T-lymphocytes as well as mast cells and osteoblastic cells that controls the production and differentiation of hematopoietic progenitor cells into lineage-restricted cells. Also stimulates mature basophils, eosinophils, and monocytes to become functionally activated. In addition, plays an important role in neural cell proliferation and survival. Participates as well in bone homeostasis and inhibits osteoclast differentiation by preventing NF-kappa-B nuclear translocation and activation. Mechanistically, exerts its biological effects through a receptor composed of IL3RA subunit and a signal transducing subunit IL3RB (By similarity). Receptor stimulation results in the rapid activation of JAK2 kinase activity leading to STAT5-mediated transcriptional program (PubMed:10376805, PubMed:31990690, PubMed:8378315). Alternatively, contributes to cell survival under oxidative stress in non-hematopoietic systems by activating pathways mediated by PI3K/AKT and ERK (By similarity).</text>
</comment>
<comment type="subunit">
    <text>Monomer.</text>
</comment>
<comment type="subcellular location">
    <subcellularLocation>
        <location>Secreted</location>
    </subcellularLocation>
</comment>
<comment type="tissue specificity">
    <text>Activated T-cells, mast cells, natural killer cells.</text>
</comment>
<comment type="disruption phenotype">
    <text evidence="7">IL-3-deficient animals show no abnormalities. Analysis of steady-state hematopoiesis demonstrates normal numbers of peripheral blood cells, bone marrow and splenic hematopoietic progenitors. However, they show impaired contact hypersensitivity reactions.</text>
</comment>
<comment type="similarity">
    <text evidence="8">Belongs to the IL-3 family.</text>
</comment>
<feature type="signal peptide">
    <location>
        <begin position="1"/>
        <end position="26"/>
    </location>
</feature>
<feature type="chain" id="PRO_0000015519" description="Interleukin-3">
    <location>
        <begin position="27"/>
        <end position="166"/>
    </location>
</feature>
<feature type="region of interest" description="Disordered" evidence="2">
    <location>
        <begin position="145"/>
        <end position="166"/>
    </location>
</feature>
<feature type="glycosylation site" description="N-linked (GlcNAc...) asparagine" evidence="4">
    <location>
        <position position="42"/>
    </location>
</feature>
<feature type="glycosylation site" description="N-linked (GlcNAc...) asparagine; partial" evidence="4">
    <location>
        <position position="112"/>
    </location>
</feature>
<feature type="disulfide bond" evidence="4">
    <location>
        <begin position="43"/>
        <end position="106"/>
    </location>
</feature>
<feature type="disulfide bond" evidence="4">
    <location>
        <begin position="105"/>
        <end position="166"/>
    </location>
</feature>
<feature type="strand" evidence="9">
    <location>
        <begin position="37"/>
        <end position="41"/>
    </location>
</feature>
<feature type="helix" evidence="9">
    <location>
        <begin position="44"/>
        <end position="53"/>
    </location>
</feature>
<feature type="helix" evidence="9">
    <location>
        <begin position="67"/>
        <end position="69"/>
    </location>
</feature>
<feature type="turn" evidence="9">
    <location>
        <begin position="71"/>
        <end position="73"/>
    </location>
</feature>
<feature type="helix" evidence="9">
    <location>
        <begin position="74"/>
        <end position="85"/>
    </location>
</feature>
<feature type="turn" evidence="9">
    <location>
        <begin position="86"/>
        <end position="88"/>
    </location>
</feature>
<feature type="helix" evidence="9">
    <location>
        <begin position="90"/>
        <end position="93"/>
    </location>
</feature>
<feature type="helix" evidence="9">
    <location>
        <begin position="97"/>
        <end position="106"/>
    </location>
</feature>
<feature type="helix" evidence="9">
    <location>
        <begin position="124"/>
        <end position="137"/>
    </location>
</feature>
<feature type="strand" evidence="9">
    <location>
        <begin position="140"/>
        <end position="142"/>
    </location>
</feature>
<feature type="strand" evidence="9">
    <location>
        <begin position="151"/>
        <end position="153"/>
    </location>
</feature>
<keyword id="KW-0002">3D-structure</keyword>
<keyword id="KW-0202">Cytokine</keyword>
<keyword id="KW-1015">Disulfide bond</keyword>
<keyword id="KW-0325">Glycoprotein</keyword>
<keyword id="KW-0339">Growth factor</keyword>
<keyword id="KW-1185">Reference proteome</keyword>
<keyword id="KW-0964">Secreted</keyword>
<keyword id="KW-0732">Signal</keyword>
<evidence type="ECO:0000250" key="1">
    <source>
        <dbReference type="UniProtKB" id="P08700"/>
    </source>
</evidence>
<evidence type="ECO:0000256" key="2">
    <source>
        <dbReference type="SAM" id="MobiDB-lite"/>
    </source>
</evidence>
<evidence type="ECO:0000269" key="3">
    <source>
    </source>
</evidence>
<evidence type="ECO:0000269" key="4">
    <source>
    </source>
</evidence>
<evidence type="ECO:0000269" key="5">
    <source>
    </source>
</evidence>
<evidence type="ECO:0000269" key="6">
    <source>
    </source>
</evidence>
<evidence type="ECO:0000269" key="7">
    <source>
    </source>
</evidence>
<evidence type="ECO:0000305" key="8"/>
<evidence type="ECO:0007829" key="9">
    <source>
        <dbReference type="PDB" id="2L3O"/>
    </source>
</evidence>
<accession>P01586</accession>
<dbReference type="EMBL" id="K01850">
    <property type="protein sequence ID" value="AAA39291.1"/>
    <property type="molecule type" value="mRNA"/>
</dbReference>
<dbReference type="EMBL" id="K01668">
    <property type="protein sequence ID" value="AAA39507.1"/>
    <property type="molecule type" value="mRNA"/>
</dbReference>
<dbReference type="EMBL" id="K03233">
    <property type="protein sequence ID" value="AAA39293.1"/>
    <property type="molecule type" value="Genomic_DNA"/>
</dbReference>
<dbReference type="EMBL" id="X02732">
    <property type="protein sequence ID" value="CAA26514.1"/>
    <property type="molecule type" value="Genomic_DNA"/>
</dbReference>
<dbReference type="EMBL" id="M20128">
    <property type="protein sequence ID" value="AAA39308.1"/>
    <property type="molecule type" value="Genomic_DNA"/>
</dbReference>
<dbReference type="EMBL" id="M14394">
    <property type="protein sequence ID" value="AAA39308.1"/>
    <property type="status" value="JOINED"/>
    <property type="molecule type" value="Genomic_DNA"/>
</dbReference>
<dbReference type="CCDS" id="CCDS24693.1"/>
<dbReference type="PIR" id="A25481">
    <property type="entry name" value="ICMS3"/>
</dbReference>
<dbReference type="RefSeq" id="NP_034686.2">
    <property type="nucleotide sequence ID" value="NM_010556.4"/>
</dbReference>
<dbReference type="PDB" id="2L3O">
    <property type="method" value="NMR"/>
    <property type="chains" value="A=33-156"/>
</dbReference>
<dbReference type="PDBsum" id="2L3O"/>
<dbReference type="BMRB" id="P01586"/>
<dbReference type="SMR" id="P01586"/>
<dbReference type="FunCoup" id="P01586">
    <property type="interactions" value="690"/>
</dbReference>
<dbReference type="STRING" id="10090.ENSMUSP00000019058"/>
<dbReference type="GlyCosmos" id="P01586">
    <property type="glycosylation" value="2 sites, No reported glycans"/>
</dbReference>
<dbReference type="GlyGen" id="P01586">
    <property type="glycosylation" value="2 sites"/>
</dbReference>
<dbReference type="iPTMnet" id="P01586"/>
<dbReference type="PaxDb" id="10090-ENSMUSP00000019058"/>
<dbReference type="Antibodypedia" id="14353">
    <property type="antibodies" value="877 antibodies from 42 providers"/>
</dbReference>
<dbReference type="DNASU" id="16187"/>
<dbReference type="Ensembl" id="ENSMUST00000019058.6">
    <property type="protein sequence ID" value="ENSMUSP00000019058.6"/>
    <property type="gene ID" value="ENSMUSG00000018914.6"/>
</dbReference>
<dbReference type="GeneID" id="16187"/>
<dbReference type="KEGG" id="mmu:16187"/>
<dbReference type="UCSC" id="uc007ixn.1">
    <property type="organism name" value="mouse"/>
</dbReference>
<dbReference type="AGR" id="MGI:96552"/>
<dbReference type="CTD" id="3562"/>
<dbReference type="MGI" id="MGI:96552">
    <property type="gene designation" value="Il3"/>
</dbReference>
<dbReference type="VEuPathDB" id="HostDB:ENSMUSG00000018914"/>
<dbReference type="eggNOG" id="ENOG502TD4X">
    <property type="taxonomic scope" value="Eukaryota"/>
</dbReference>
<dbReference type="GeneTree" id="ENSGT00940000163393"/>
<dbReference type="HOGENOM" id="CLU_1602158_0_0_1"/>
<dbReference type="InParanoid" id="P01586"/>
<dbReference type="OMA" id="EDRYVIK"/>
<dbReference type="OrthoDB" id="9630871at2759"/>
<dbReference type="PhylomeDB" id="P01586"/>
<dbReference type="TreeFam" id="TF338567"/>
<dbReference type="Reactome" id="R-MMU-512988">
    <property type="pathway name" value="Interleukin-3, Interleukin-5 and GM-CSF signaling"/>
</dbReference>
<dbReference type="Reactome" id="R-MMU-5673001">
    <property type="pathway name" value="RAF/MAP kinase cascade"/>
</dbReference>
<dbReference type="Reactome" id="R-MMU-912526">
    <property type="pathway name" value="Interleukin receptor SHC signaling"/>
</dbReference>
<dbReference type="BioGRID-ORCS" id="16187">
    <property type="hits" value="0 hits in 75 CRISPR screens"/>
</dbReference>
<dbReference type="EvolutionaryTrace" id="P01586"/>
<dbReference type="PRO" id="PR:P01586"/>
<dbReference type="Proteomes" id="UP000000589">
    <property type="component" value="Chromosome 11"/>
</dbReference>
<dbReference type="RNAct" id="P01586">
    <property type="molecule type" value="protein"/>
</dbReference>
<dbReference type="Bgee" id="ENSMUSG00000018914">
    <property type="expression patterns" value="Expressed in embryonic cell in blastocyst and 20 other cell types or tissues"/>
</dbReference>
<dbReference type="ExpressionAtlas" id="P01586">
    <property type="expression patterns" value="baseline and differential"/>
</dbReference>
<dbReference type="GO" id="GO:0005615">
    <property type="term" value="C:extracellular space"/>
    <property type="evidence" value="ECO:0000314"/>
    <property type="project" value="MGI"/>
</dbReference>
<dbReference type="GO" id="GO:0005125">
    <property type="term" value="F:cytokine activity"/>
    <property type="evidence" value="ECO:0000314"/>
    <property type="project" value="MGI"/>
</dbReference>
<dbReference type="GO" id="GO:0008083">
    <property type="term" value="F:growth factor activity"/>
    <property type="evidence" value="ECO:0000314"/>
    <property type="project" value="MGI"/>
</dbReference>
<dbReference type="GO" id="GO:0005135">
    <property type="term" value="F:interleukin-3 receptor binding"/>
    <property type="evidence" value="ECO:0000353"/>
    <property type="project" value="MGI"/>
</dbReference>
<dbReference type="GO" id="GO:0001783">
    <property type="term" value="P:B cell apoptotic process"/>
    <property type="evidence" value="ECO:0000314"/>
    <property type="project" value="MGI"/>
</dbReference>
<dbReference type="GO" id="GO:0042100">
    <property type="term" value="P:B cell proliferation"/>
    <property type="evidence" value="ECO:0000314"/>
    <property type="project" value="MGI"/>
</dbReference>
<dbReference type="GO" id="GO:0008283">
    <property type="term" value="P:cell population proliferation"/>
    <property type="evidence" value="ECO:0000314"/>
    <property type="project" value="MGI"/>
</dbReference>
<dbReference type="GO" id="GO:0019221">
    <property type="term" value="P:cytokine-mediated signaling pathway"/>
    <property type="evidence" value="ECO:0000314"/>
    <property type="project" value="MGI"/>
</dbReference>
<dbReference type="GO" id="GO:0097192">
    <property type="term" value="P:extrinsic apoptotic signaling pathway in absence of ligand"/>
    <property type="evidence" value="ECO:0000314"/>
    <property type="project" value="MGI"/>
</dbReference>
<dbReference type="GO" id="GO:0002244">
    <property type="term" value="P:hematopoietic progenitor cell differentiation"/>
    <property type="evidence" value="ECO:0000316"/>
    <property type="project" value="MGI"/>
</dbReference>
<dbReference type="GO" id="GO:0006955">
    <property type="term" value="P:immune response"/>
    <property type="evidence" value="ECO:0007669"/>
    <property type="project" value="InterPro"/>
</dbReference>
<dbReference type="GO" id="GO:0038156">
    <property type="term" value="P:interleukin-3-mediated signaling pathway"/>
    <property type="evidence" value="ECO:0000314"/>
    <property type="project" value="MGI"/>
</dbReference>
<dbReference type="GO" id="GO:0007254">
    <property type="term" value="P:JNK cascade"/>
    <property type="evidence" value="ECO:0000314"/>
    <property type="project" value="MGI"/>
</dbReference>
<dbReference type="GO" id="GO:0033024">
    <property type="term" value="P:mast cell apoptotic process"/>
    <property type="evidence" value="ECO:0000314"/>
    <property type="project" value="MGI"/>
</dbReference>
<dbReference type="GO" id="GO:0070662">
    <property type="term" value="P:mast cell proliferation"/>
    <property type="evidence" value="ECO:0000314"/>
    <property type="project" value="MGI"/>
</dbReference>
<dbReference type="GO" id="GO:0030224">
    <property type="term" value="P:monocyte differentiation"/>
    <property type="evidence" value="ECO:0000316"/>
    <property type="project" value="MGI"/>
</dbReference>
<dbReference type="GO" id="GO:0033028">
    <property type="term" value="P:myeloid cell apoptotic process"/>
    <property type="evidence" value="ECO:0000314"/>
    <property type="project" value="MGI"/>
</dbReference>
<dbReference type="GO" id="GO:0002573">
    <property type="term" value="P:myeloid leukocyte differentiation"/>
    <property type="evidence" value="ECO:0000316"/>
    <property type="project" value="MGI"/>
</dbReference>
<dbReference type="GO" id="GO:0010507">
    <property type="term" value="P:negative regulation of autophagy"/>
    <property type="evidence" value="ECO:0000314"/>
    <property type="project" value="MGI"/>
</dbReference>
<dbReference type="GO" id="GO:0002903">
    <property type="term" value="P:negative regulation of B cell apoptotic process"/>
    <property type="evidence" value="ECO:0000314"/>
    <property type="project" value="MGI"/>
</dbReference>
<dbReference type="GO" id="GO:0033026">
    <property type="term" value="P:negative regulation of mast cell apoptotic process"/>
    <property type="evidence" value="ECO:0000314"/>
    <property type="project" value="MGI"/>
</dbReference>
<dbReference type="GO" id="GO:0033033">
    <property type="term" value="P:negative regulation of myeloid cell apoptotic process"/>
    <property type="evidence" value="ECO:0000314"/>
    <property type="project" value="MGI"/>
</dbReference>
<dbReference type="GO" id="GO:0030890">
    <property type="term" value="P:positive regulation of B cell proliferation"/>
    <property type="evidence" value="ECO:0000314"/>
    <property type="project" value="MGI"/>
</dbReference>
<dbReference type="GO" id="GO:0008284">
    <property type="term" value="P:positive regulation of cell population proliferation"/>
    <property type="evidence" value="ECO:0000314"/>
    <property type="project" value="MGI"/>
</dbReference>
<dbReference type="GO" id="GO:1901534">
    <property type="term" value="P:positive regulation of hematopoietic progenitor cell differentiation"/>
    <property type="evidence" value="ECO:0000316"/>
    <property type="project" value="MGI"/>
</dbReference>
<dbReference type="GO" id="GO:0046330">
    <property type="term" value="P:positive regulation of JNK cascade"/>
    <property type="evidence" value="ECO:0000314"/>
    <property type="project" value="MGI"/>
</dbReference>
<dbReference type="GO" id="GO:0070668">
    <property type="term" value="P:positive regulation of mast cell proliferation"/>
    <property type="evidence" value="ECO:0000314"/>
    <property type="project" value="MGI"/>
</dbReference>
<dbReference type="GO" id="GO:0002763">
    <property type="term" value="P:positive regulation of myeloid leukocyte differentiation"/>
    <property type="evidence" value="ECO:0000316"/>
    <property type="project" value="MGI"/>
</dbReference>
<dbReference type="GO" id="GO:0042102">
    <property type="term" value="P:positive regulation of T cell proliferation"/>
    <property type="evidence" value="ECO:0000314"/>
    <property type="project" value="MGI"/>
</dbReference>
<dbReference type="GO" id="GO:0001558">
    <property type="term" value="P:regulation of cell growth"/>
    <property type="evidence" value="ECO:0000316"/>
    <property type="project" value="MGI"/>
</dbReference>
<dbReference type="GO" id="GO:0010468">
    <property type="term" value="P:regulation of gene expression"/>
    <property type="evidence" value="ECO:0000314"/>
    <property type="project" value="MGI"/>
</dbReference>
<dbReference type="GO" id="GO:0006110">
    <property type="term" value="P:regulation of glycolytic process"/>
    <property type="evidence" value="ECO:0000316"/>
    <property type="project" value="MGI"/>
</dbReference>
<dbReference type="GO" id="GO:0001666">
    <property type="term" value="P:response to hypoxia"/>
    <property type="evidence" value="ECO:0000316"/>
    <property type="project" value="MGI"/>
</dbReference>
<dbReference type="GO" id="GO:0042098">
    <property type="term" value="P:T cell proliferation"/>
    <property type="evidence" value="ECO:0000314"/>
    <property type="project" value="MGI"/>
</dbReference>
<dbReference type="Gene3D" id="1.20.1250.10">
    <property type="match status" value="1"/>
</dbReference>
<dbReference type="InterPro" id="IPR009079">
    <property type="entry name" value="4_helix_cytokine-like_core"/>
</dbReference>
<dbReference type="InterPro" id="IPR002183">
    <property type="entry name" value="IL-3"/>
</dbReference>
<dbReference type="PANTHER" id="PTHR48489">
    <property type="entry name" value="INTERLEUKIN-3"/>
    <property type="match status" value="1"/>
</dbReference>
<dbReference type="PANTHER" id="PTHR48489:SF1">
    <property type="entry name" value="INTERLEUKIN-3"/>
    <property type="match status" value="1"/>
</dbReference>
<dbReference type="Pfam" id="PF02059">
    <property type="entry name" value="IL3"/>
    <property type="match status" value="1"/>
</dbReference>
<dbReference type="PIRSF" id="PIRSF001939">
    <property type="entry name" value="IL-3"/>
    <property type="match status" value="1"/>
</dbReference>
<dbReference type="PRINTS" id="PR00430">
    <property type="entry name" value="INTERLEUKIN3"/>
</dbReference>
<dbReference type="SUPFAM" id="SSF47266">
    <property type="entry name" value="4-helical cytokines"/>
    <property type="match status" value="1"/>
</dbReference>
<organism>
    <name type="scientific">Mus musculus</name>
    <name type="common">Mouse</name>
    <dbReference type="NCBI Taxonomy" id="10090"/>
    <lineage>
        <taxon>Eukaryota</taxon>
        <taxon>Metazoa</taxon>
        <taxon>Chordata</taxon>
        <taxon>Craniata</taxon>
        <taxon>Vertebrata</taxon>
        <taxon>Euteleostomi</taxon>
        <taxon>Mammalia</taxon>
        <taxon>Eutheria</taxon>
        <taxon>Euarchontoglires</taxon>
        <taxon>Glires</taxon>
        <taxon>Rodentia</taxon>
        <taxon>Myomorpha</taxon>
        <taxon>Muroidea</taxon>
        <taxon>Muridae</taxon>
        <taxon>Murinae</taxon>
        <taxon>Mus</taxon>
        <taxon>Mus</taxon>
    </lineage>
</organism>